<proteinExistence type="evidence at protein level"/>
<keyword id="KW-0174">Coenzyme M biosynthesis</keyword>
<keyword id="KW-0378">Hydrolase</keyword>
<keyword id="KW-0460">Magnesium</keyword>
<keyword id="KW-1185">Reference proteome</keyword>
<evidence type="ECO:0000305" key="1"/>
<reference key="1">
    <citation type="journal article" date="1996" name="Science">
        <title>Complete genome sequence of the methanogenic archaeon, Methanococcus jannaschii.</title>
        <authorList>
            <person name="Bult C.J."/>
            <person name="White O."/>
            <person name="Olsen G.J."/>
            <person name="Zhou L."/>
            <person name="Fleischmann R.D."/>
            <person name="Sutton G.G."/>
            <person name="Blake J.A."/>
            <person name="FitzGerald L.M."/>
            <person name="Clayton R.A."/>
            <person name="Gocayne J.D."/>
            <person name="Kerlavage A.R."/>
            <person name="Dougherty B.A."/>
            <person name="Tomb J.-F."/>
            <person name="Adams M.D."/>
            <person name="Reich C.I."/>
            <person name="Overbeek R."/>
            <person name="Kirkness E.F."/>
            <person name="Weinstock K.G."/>
            <person name="Merrick J.M."/>
            <person name="Glodek A."/>
            <person name="Scott J.L."/>
            <person name="Geoghagen N.S.M."/>
            <person name="Weidman J.F."/>
            <person name="Fuhrmann J.L."/>
            <person name="Nguyen D."/>
            <person name="Utterback T.R."/>
            <person name="Kelley J.M."/>
            <person name="Peterson J.D."/>
            <person name="Sadow P.W."/>
            <person name="Hanna M.C."/>
            <person name="Cotton M.D."/>
            <person name="Roberts K.M."/>
            <person name="Hurst M.A."/>
            <person name="Kaine B.P."/>
            <person name="Borodovsky M."/>
            <person name="Klenk H.-P."/>
            <person name="Fraser C.M."/>
            <person name="Smith H.O."/>
            <person name="Woese C.R."/>
            <person name="Venter J.C."/>
        </authorList>
    </citation>
    <scope>NUCLEOTIDE SEQUENCE [LARGE SCALE GENOMIC DNA]</scope>
    <source>
        <strain>ATCC 43067 / DSM 2661 / JAL-1 / JCM 10045 / NBRC 100440</strain>
    </source>
</reference>
<reference key="2">
    <citation type="journal article" date="2001" name="Eur. J. Biochem.">
        <title>Identification of coenzyme M biosynthetic 2-phosphosulfolactate phosphatase. A member of a new class of Mg2+-dependent acid phosphatases.</title>
        <authorList>
            <person name="Graham D.E."/>
            <person name="Graupner M."/>
            <person name="Xu H."/>
            <person name="White R.H."/>
        </authorList>
    </citation>
    <scope>CHARACTERIZATION</scope>
    <source>
        <strain>ATCC 43067 / DSM 2661 / JAL-1 / JCM 10045 / NBRC 100440</strain>
    </source>
</reference>
<organism>
    <name type="scientific">Methanocaldococcus jannaschii (strain ATCC 43067 / DSM 2661 / JAL-1 / JCM 10045 / NBRC 100440)</name>
    <name type="common">Methanococcus jannaschii</name>
    <dbReference type="NCBI Taxonomy" id="243232"/>
    <lineage>
        <taxon>Archaea</taxon>
        <taxon>Methanobacteriati</taxon>
        <taxon>Methanobacteriota</taxon>
        <taxon>Methanomada group</taxon>
        <taxon>Methanococci</taxon>
        <taxon>Methanococcales</taxon>
        <taxon>Methanocaldococcaceae</taxon>
        <taxon>Methanocaldococcus</taxon>
    </lineage>
</organism>
<accession>Q58540</accession>
<gene>
    <name type="primary">comB</name>
    <name type="ordered locus">MJ1140</name>
</gene>
<sequence length="224" mass="25114">MITLCNRFTEYKCGNVAIVVDVLRASTTITTLLSFIDEVYITTSTSKKENAIYIGERKGRKIEGFDFGNSPTEILANKDIIKERYENGEKVILTTTNGTRVLKSLDAEHIFIGAIVNAKYVAKAVEDFEDVSLVPCHRENNFAIDDFIGCGVIAKYLNGEFDEFIKAALELTKHDWMSLILNSSSAENLKNLGYEKDVTFAILENSIDAVGIYKKDKSKVVRFK</sequence>
<name>COMB_METJA</name>
<protein>
    <recommendedName>
        <fullName>2-phosphosulfolactate phosphatase</fullName>
        <ecNumber>3.1.3.71</ecNumber>
    </recommendedName>
</protein>
<dbReference type="EC" id="3.1.3.71"/>
<dbReference type="EMBL" id="L77117">
    <property type="protein sequence ID" value="AAB99140.1"/>
    <property type="status" value="ALT_INIT"/>
    <property type="molecule type" value="Genomic_DNA"/>
</dbReference>
<dbReference type="PIR" id="C64442">
    <property type="entry name" value="C64442"/>
</dbReference>
<dbReference type="RefSeq" id="WP_064496734.1">
    <property type="nucleotide sequence ID" value="NC_000909.1"/>
</dbReference>
<dbReference type="SMR" id="Q58540"/>
<dbReference type="FunCoup" id="Q58540">
    <property type="interactions" value="110"/>
</dbReference>
<dbReference type="STRING" id="243232.MJ_1140"/>
<dbReference type="PaxDb" id="243232-MJ_1140"/>
<dbReference type="DNASU" id="1452036"/>
<dbReference type="EnsemblBacteria" id="AAB99140">
    <property type="protein sequence ID" value="AAB99140"/>
    <property type="gene ID" value="MJ_1140"/>
</dbReference>
<dbReference type="GeneID" id="1452036"/>
<dbReference type="KEGG" id="mja:MJ_1140"/>
<dbReference type="eggNOG" id="arCOG04871">
    <property type="taxonomic scope" value="Archaea"/>
</dbReference>
<dbReference type="HOGENOM" id="CLU_070028_0_1_2"/>
<dbReference type="InParanoid" id="Q58540"/>
<dbReference type="OrthoDB" id="146693at2157"/>
<dbReference type="PhylomeDB" id="Q58540"/>
<dbReference type="BioCyc" id="MetaCyc:MONOMER-2263"/>
<dbReference type="UniPathway" id="UPA00355">
    <property type="reaction ID" value="UER00470"/>
</dbReference>
<dbReference type="Proteomes" id="UP000000805">
    <property type="component" value="Chromosome"/>
</dbReference>
<dbReference type="GO" id="GO:0050532">
    <property type="term" value="F:2-phosphosulfolactate phosphatase activity"/>
    <property type="evidence" value="ECO:0007669"/>
    <property type="project" value="UniProtKB-UniRule"/>
</dbReference>
<dbReference type="GO" id="GO:0000287">
    <property type="term" value="F:magnesium ion binding"/>
    <property type="evidence" value="ECO:0007669"/>
    <property type="project" value="UniProtKB-UniRule"/>
</dbReference>
<dbReference type="GO" id="GO:0050545">
    <property type="term" value="F:sulfopyruvate decarboxylase activity"/>
    <property type="evidence" value="ECO:0000314"/>
    <property type="project" value="MENGO"/>
</dbReference>
<dbReference type="GO" id="GO:0019295">
    <property type="term" value="P:coenzyme M biosynthetic process"/>
    <property type="evidence" value="ECO:0007669"/>
    <property type="project" value="UniProtKB-UniRule"/>
</dbReference>
<dbReference type="FunFam" id="3.90.1560.10:FF:000001">
    <property type="entry name" value="Probable 2-phosphosulfolactate phosphatase"/>
    <property type="match status" value="1"/>
</dbReference>
<dbReference type="Gene3D" id="3.90.1560.10">
    <property type="entry name" value="ComB-like"/>
    <property type="match status" value="1"/>
</dbReference>
<dbReference type="HAMAP" id="MF_00490">
    <property type="entry name" value="ComB"/>
    <property type="match status" value="1"/>
</dbReference>
<dbReference type="InterPro" id="IPR005238">
    <property type="entry name" value="ComB-like"/>
</dbReference>
<dbReference type="InterPro" id="IPR036702">
    <property type="entry name" value="ComB-like_sf"/>
</dbReference>
<dbReference type="InterPro" id="IPR027639">
    <property type="entry name" value="ComB_archaeal"/>
</dbReference>
<dbReference type="NCBIfam" id="TIGR00298">
    <property type="entry name" value="2-phosphosulfolactate phosphatase"/>
    <property type="match status" value="1"/>
</dbReference>
<dbReference type="PANTHER" id="PTHR37311">
    <property type="entry name" value="2-PHOSPHOSULFOLACTATE PHOSPHATASE-RELATED"/>
    <property type="match status" value="1"/>
</dbReference>
<dbReference type="PANTHER" id="PTHR37311:SF1">
    <property type="entry name" value="2-PHOSPHOSULFOLACTATE PHOSPHATASE-RELATED"/>
    <property type="match status" value="1"/>
</dbReference>
<dbReference type="Pfam" id="PF04029">
    <property type="entry name" value="2-ph_phosp"/>
    <property type="match status" value="1"/>
</dbReference>
<dbReference type="SUPFAM" id="SSF142823">
    <property type="entry name" value="ComB-like"/>
    <property type="match status" value="1"/>
</dbReference>
<comment type="function">
    <text>Hydrolyzes both enantiomers of 2-phosphosulfolactate. Able to hydrolyze both enantiomers of 2-hydroxycarboxylic acids with pseudosymmetric centers of inversion. Specifically hydrolyzes (S)-phospholactate and (S)-phosphoglycerate.</text>
</comment>
<comment type="catalytic activity">
    <reaction>
        <text>(2R)-O-phospho-3-sulfolactate + H2O = (2R)-3-sulfolactate + phosphate</text>
        <dbReference type="Rhea" id="RHEA:23416"/>
        <dbReference type="ChEBI" id="CHEBI:15377"/>
        <dbReference type="ChEBI" id="CHEBI:15597"/>
        <dbReference type="ChEBI" id="CHEBI:43474"/>
        <dbReference type="ChEBI" id="CHEBI:58738"/>
        <dbReference type="EC" id="3.1.3.71"/>
    </reaction>
</comment>
<comment type="cofactor">
    <cofactor>
        <name>Mg(2+)</name>
        <dbReference type="ChEBI" id="CHEBI:18420"/>
    </cofactor>
</comment>
<comment type="activity regulation">
    <text>Inhibited by vanadate.</text>
</comment>
<comment type="biophysicochemical properties">
    <phDependence>
        <text>Optimum pH is 5.5.</text>
    </phDependence>
    <temperatureDependence>
        <text>Optimum temperature is 75 degrees Celsius.</text>
    </temperatureDependence>
</comment>
<comment type="pathway">
    <text>Cofactor biosynthesis; coenzyme M biosynthesis; sulfoacetaldehyde from phosphoenolpyruvate and sulfite: step 2/4.</text>
</comment>
<comment type="subunit">
    <text>Monomer.</text>
</comment>
<comment type="similarity">
    <text evidence="1">Belongs to the ComB family.</text>
</comment>
<comment type="sequence caution" evidence="1">
    <conflict type="erroneous initiation">
        <sequence resource="EMBL-CDS" id="AAB99140"/>
    </conflict>
</comment>
<feature type="chain" id="PRO_0000081459" description="2-phosphosulfolactate phosphatase">
    <location>
        <begin position="1"/>
        <end position="224"/>
    </location>
</feature>